<dbReference type="EC" id="7.1.1.-" evidence="1"/>
<dbReference type="EMBL" id="CP000378">
    <property type="protein sequence ID" value="ABF76539.1"/>
    <property type="molecule type" value="Genomic_DNA"/>
</dbReference>
<dbReference type="SMR" id="Q1BV16"/>
<dbReference type="HOGENOM" id="CLU_015134_1_1_4"/>
<dbReference type="GO" id="GO:0005886">
    <property type="term" value="C:plasma membrane"/>
    <property type="evidence" value="ECO:0007669"/>
    <property type="project" value="UniProtKB-SubCell"/>
</dbReference>
<dbReference type="GO" id="GO:0051287">
    <property type="term" value="F:NAD binding"/>
    <property type="evidence" value="ECO:0007669"/>
    <property type="project" value="InterPro"/>
</dbReference>
<dbReference type="GO" id="GO:0050136">
    <property type="term" value="F:NADH:ubiquinone reductase (non-electrogenic) activity"/>
    <property type="evidence" value="ECO:0007669"/>
    <property type="project" value="UniProtKB-UniRule"/>
</dbReference>
<dbReference type="GO" id="GO:0048038">
    <property type="term" value="F:quinone binding"/>
    <property type="evidence" value="ECO:0007669"/>
    <property type="project" value="UniProtKB-KW"/>
</dbReference>
<dbReference type="FunFam" id="1.10.645.10:FF:000005">
    <property type="entry name" value="NADH-quinone oxidoreductase subunit D"/>
    <property type="match status" value="1"/>
</dbReference>
<dbReference type="Gene3D" id="1.10.645.10">
    <property type="entry name" value="Cytochrome-c3 Hydrogenase, chain B"/>
    <property type="match status" value="1"/>
</dbReference>
<dbReference type="HAMAP" id="MF_01358">
    <property type="entry name" value="NDH1_NuoD"/>
    <property type="match status" value="1"/>
</dbReference>
<dbReference type="InterPro" id="IPR001135">
    <property type="entry name" value="NADH_Q_OxRdtase_suD"/>
</dbReference>
<dbReference type="InterPro" id="IPR014029">
    <property type="entry name" value="NADH_UbQ_OxRdtase_49kDa_CS"/>
</dbReference>
<dbReference type="InterPro" id="IPR022885">
    <property type="entry name" value="NDH1_su_D/H"/>
</dbReference>
<dbReference type="InterPro" id="IPR029014">
    <property type="entry name" value="NiFe-Hase_large"/>
</dbReference>
<dbReference type="NCBIfam" id="TIGR01962">
    <property type="entry name" value="NuoD"/>
    <property type="match status" value="1"/>
</dbReference>
<dbReference type="NCBIfam" id="NF004739">
    <property type="entry name" value="PRK06075.1"/>
    <property type="match status" value="1"/>
</dbReference>
<dbReference type="PANTHER" id="PTHR11993:SF10">
    <property type="entry name" value="NADH DEHYDROGENASE [UBIQUINONE] IRON-SULFUR PROTEIN 2, MITOCHONDRIAL"/>
    <property type="match status" value="1"/>
</dbReference>
<dbReference type="PANTHER" id="PTHR11993">
    <property type="entry name" value="NADH-UBIQUINONE OXIDOREDUCTASE 49 KDA SUBUNIT"/>
    <property type="match status" value="1"/>
</dbReference>
<dbReference type="Pfam" id="PF00346">
    <property type="entry name" value="Complex1_49kDa"/>
    <property type="match status" value="1"/>
</dbReference>
<dbReference type="SUPFAM" id="SSF56762">
    <property type="entry name" value="HydB/Nqo4-like"/>
    <property type="match status" value="1"/>
</dbReference>
<dbReference type="PROSITE" id="PS00535">
    <property type="entry name" value="COMPLEX1_49K"/>
    <property type="match status" value="1"/>
</dbReference>
<name>NUOD_BURO1</name>
<gene>
    <name evidence="1" type="primary">nuoD</name>
    <name type="ordered locus">Bcen_1634</name>
</gene>
<proteinExistence type="inferred from homology"/>
<keyword id="KW-0997">Cell inner membrane</keyword>
<keyword id="KW-1003">Cell membrane</keyword>
<keyword id="KW-0472">Membrane</keyword>
<keyword id="KW-0520">NAD</keyword>
<keyword id="KW-0874">Quinone</keyword>
<keyword id="KW-1278">Translocase</keyword>
<keyword id="KW-0813">Transport</keyword>
<keyword id="KW-0830">Ubiquinone</keyword>
<reference key="1">
    <citation type="submission" date="2006-05" db="EMBL/GenBank/DDBJ databases">
        <title>Complete sequence of chromosome 1 of Burkholderia cenocepacia AU 1054.</title>
        <authorList>
            <consortium name="US DOE Joint Genome Institute"/>
            <person name="Copeland A."/>
            <person name="Lucas S."/>
            <person name="Lapidus A."/>
            <person name="Barry K."/>
            <person name="Detter J.C."/>
            <person name="Glavina del Rio T."/>
            <person name="Hammon N."/>
            <person name="Israni S."/>
            <person name="Dalin E."/>
            <person name="Tice H."/>
            <person name="Pitluck S."/>
            <person name="Chain P."/>
            <person name="Malfatti S."/>
            <person name="Shin M."/>
            <person name="Vergez L."/>
            <person name="Schmutz J."/>
            <person name="Larimer F."/>
            <person name="Land M."/>
            <person name="Hauser L."/>
            <person name="Kyrpides N."/>
            <person name="Lykidis A."/>
            <person name="LiPuma J.J."/>
            <person name="Konstantinidis K."/>
            <person name="Tiedje J.M."/>
            <person name="Richardson P."/>
        </authorList>
    </citation>
    <scope>NUCLEOTIDE SEQUENCE [LARGE SCALE GENOMIC DNA]</scope>
    <source>
        <strain>AU 1054</strain>
    </source>
</reference>
<protein>
    <recommendedName>
        <fullName evidence="1">NADH-quinone oxidoreductase subunit D</fullName>
        <ecNumber evidence="1">7.1.1.-</ecNumber>
    </recommendedName>
    <alternativeName>
        <fullName evidence="1">NADH dehydrogenase I subunit D</fullName>
    </alternativeName>
    <alternativeName>
        <fullName evidence="1">NDH-1 subunit D</fullName>
    </alternativeName>
</protein>
<sequence>MAEIKNYTLNFGPQHPAAHGVLRLVLELDGEVIQRADPHIGLLHRATEKLAESKTFIQSVPYMDRLDYVSMMVNEHGYVLAIEKLLGIEVPERAQYIRVLFDEITRVLNHLMWIGAHALDVGAMAVFLYAFREREDLMDVYEAVSGARMHAAYYRPGGVYRDLPDAMPQYKASKIRNEKALAKMNEARSGSVLDFIDDFFTRFPKCVDEYETLLTDNRIWKQRLVGIGVVSPERALQMGLTGPMLRGSGIAWDLRKKQPYEVYDRMDFDVPVGVNGDCYDRYLVRVEEMRQSIRIAKQCIEWLRKNPGPVMTDNHKVAPPSRVGMKTNMEDLIHHFKLFTEGFHVPEGEAYAAVEHPKGEFGIYLVSDGANKPYRLKIRAPGFAHLASLDEMARGHMIADAVTIIGTQDIVFGEIDR</sequence>
<accession>Q1BV16</accession>
<feature type="chain" id="PRO_0000371824" description="NADH-quinone oxidoreductase subunit D">
    <location>
        <begin position="1"/>
        <end position="417"/>
    </location>
</feature>
<organism>
    <name type="scientific">Burkholderia orbicola (strain AU 1054)</name>
    <dbReference type="NCBI Taxonomy" id="331271"/>
    <lineage>
        <taxon>Bacteria</taxon>
        <taxon>Pseudomonadati</taxon>
        <taxon>Pseudomonadota</taxon>
        <taxon>Betaproteobacteria</taxon>
        <taxon>Burkholderiales</taxon>
        <taxon>Burkholderiaceae</taxon>
        <taxon>Burkholderia</taxon>
        <taxon>Burkholderia cepacia complex</taxon>
        <taxon>Burkholderia orbicola</taxon>
    </lineage>
</organism>
<comment type="function">
    <text evidence="1">NDH-1 shuttles electrons from NADH, via FMN and iron-sulfur (Fe-S) centers, to quinones in the respiratory chain. The immediate electron acceptor for the enzyme in this species is believed to be ubiquinone. Couples the redox reaction to proton translocation (for every two electrons transferred, four hydrogen ions are translocated across the cytoplasmic membrane), and thus conserves the redox energy in a proton gradient.</text>
</comment>
<comment type="catalytic activity">
    <reaction evidence="1">
        <text>a quinone + NADH + 5 H(+)(in) = a quinol + NAD(+) + 4 H(+)(out)</text>
        <dbReference type="Rhea" id="RHEA:57888"/>
        <dbReference type="ChEBI" id="CHEBI:15378"/>
        <dbReference type="ChEBI" id="CHEBI:24646"/>
        <dbReference type="ChEBI" id="CHEBI:57540"/>
        <dbReference type="ChEBI" id="CHEBI:57945"/>
        <dbReference type="ChEBI" id="CHEBI:132124"/>
    </reaction>
</comment>
<comment type="subunit">
    <text evidence="1">NDH-1 is composed of 14 different subunits. Subunits NuoB, C, D, E, F, and G constitute the peripheral sector of the complex.</text>
</comment>
<comment type="subcellular location">
    <subcellularLocation>
        <location evidence="1">Cell inner membrane</location>
        <topology evidence="1">Peripheral membrane protein</topology>
        <orientation evidence="1">Cytoplasmic side</orientation>
    </subcellularLocation>
</comment>
<comment type="similarity">
    <text evidence="1">Belongs to the complex I 49 kDa subunit family.</text>
</comment>
<evidence type="ECO:0000255" key="1">
    <source>
        <dbReference type="HAMAP-Rule" id="MF_01358"/>
    </source>
</evidence>